<reference key="1">
    <citation type="submission" date="2006-08" db="EMBL/GenBank/DDBJ databases">
        <authorList>
            <consortium name="NIH - Xenopus Gene Collection (XGC) project"/>
        </authorList>
    </citation>
    <scope>NUCLEOTIDE SEQUENCE [LARGE SCALE MRNA]</scope>
    <source>
        <tissue>Testis</tissue>
    </source>
</reference>
<feature type="chain" id="PRO_0000403759" description="Cytosolic carboxypeptidase 2">
    <location>
        <begin position="1"/>
        <end position="967"/>
    </location>
</feature>
<feature type="domain" description="Peptidase M14" evidence="4">
    <location>
        <begin position="330"/>
        <end position="601"/>
    </location>
</feature>
<feature type="region of interest" description="Disordered" evidence="5">
    <location>
        <begin position="679"/>
        <end position="706"/>
    </location>
</feature>
<feature type="region of interest" description="Disordered" evidence="5">
    <location>
        <begin position="944"/>
        <end position="967"/>
    </location>
</feature>
<feature type="compositionally biased region" description="Polar residues" evidence="5">
    <location>
        <begin position="946"/>
        <end position="967"/>
    </location>
</feature>
<feature type="active site" description="Proton donor/acceptor" evidence="4">
    <location>
        <position position="565"/>
    </location>
</feature>
<feature type="binding site" evidence="4">
    <location>
        <position position="396"/>
    </location>
    <ligand>
        <name>Zn(2+)</name>
        <dbReference type="ChEBI" id="CHEBI:29105"/>
        <note>catalytic</note>
    </ligand>
</feature>
<feature type="binding site" evidence="4">
    <location>
        <position position="399"/>
    </location>
    <ligand>
        <name>Zn(2+)</name>
        <dbReference type="ChEBI" id="CHEBI:29105"/>
        <note>catalytic</note>
    </ligand>
</feature>
<feature type="binding site" evidence="4">
    <location>
        <position position="492"/>
    </location>
    <ligand>
        <name>Zn(2+)</name>
        <dbReference type="ChEBI" id="CHEBI:29105"/>
        <note>catalytic</note>
    </ligand>
</feature>
<keyword id="KW-0121">Carboxypeptidase</keyword>
<keyword id="KW-0966">Cell projection</keyword>
<keyword id="KW-0963">Cytoplasm</keyword>
<keyword id="KW-0206">Cytoskeleton</keyword>
<keyword id="KW-0378">Hydrolase</keyword>
<keyword id="KW-0479">Metal-binding</keyword>
<keyword id="KW-0482">Metalloprotease</keyword>
<keyword id="KW-0645">Protease</keyword>
<keyword id="KW-1185">Reference proteome</keyword>
<keyword id="KW-0862">Zinc</keyword>
<name>CBPC2_XENTR</name>
<sequence length="967" mass="110770">MCPALSTDLKQEVLTDPYESFMHHHLQYYGYFRGLEPREQFKLPVQRCRKVVTDSDSDMPSSQEDQKKLVYSLLLDSPVFKSRQLVFEDQEGKIIPRLREPKDLYGSSSQDGCWQQARWPSECEVIKQDISHIEWDPTDREIFYKPTGNEPKPPVVSEGTGAVVYEISPAHKGSYFKGSRTGGRKCSHRKNQKVQCNNDLQFESRFESGNLQKAMKVGMYEYELTLRTDLYTSKHTQWFYFQVKNTRKGVPYRFTITNLMKTNSLYNEGLKPLLYSQQDAALKGIGWRREGKDIKYYKNTRSLDGRSLYSLTWTFEFPHDDDICYFAHCYPYTYSDLQRDLKSKISDPACSHYCKLRTLCRSLAGNSIYLLTITSPSTNLTTGAKKKAIVVTARVHPGETNGSWMMKGFLDFILSDSPDAQLLRDTFIFKVVPMLNPDGVIVGNYRCSLSGRDLNRNYKSMLKDAFPCIWHTRSMVKRLLTEREVILYCDFHGHSRKNNVFMYGCNSKGHPLTKLHERIFPLMLSKNAPDKFLFKGCKFKVQKSKEGTGRIDMWKQGIQNSYTMEATFGGSTLGNRKDTHFTTQDLKSMGHHFCDTLLDYCDPDSSKFKLCLSELQRLVEEDIREKMKQLGRDMDSDFTLSDITLSDLESSTSGSNSSESDGLPAHLVDIAEKFYQKKKRRLRSRKERNSLYQKRNARQKQKLHEAVEVSEPAAHIVRNELTKSSGKRKKEQKVAKIKFQEDLVPQTEENLTTAAPTEKSSMLYSRKPESVSMKTQMINSLPTSCVRDFMDLDHVCERQMTIRPRPSANGNRLPLIITVVQQSTLPPVPKGISALKQHPPPFHSILDQSGDQLTVADHVFRRDKSVAKRGFSSAGIRPYCSGISGEKQKVLDGSIVPLDLHLSLSPEVHRQNKPRQEPLITLGSTEYFEGFLPKPKTDPVRRFPGISSSEPHFPNSSEDITVRNTMK</sequence>
<evidence type="ECO:0000250" key="1"/>
<evidence type="ECO:0000250" key="2">
    <source>
        <dbReference type="UniProtKB" id="Q5U5Z8"/>
    </source>
</evidence>
<evidence type="ECO:0000250" key="3">
    <source>
        <dbReference type="UniProtKB" id="Q8CDK2"/>
    </source>
</evidence>
<evidence type="ECO:0000255" key="4">
    <source>
        <dbReference type="PROSITE-ProRule" id="PRU01379"/>
    </source>
</evidence>
<evidence type="ECO:0000256" key="5">
    <source>
        <dbReference type="SAM" id="MobiDB-lite"/>
    </source>
</evidence>
<evidence type="ECO:0000305" key="6"/>
<proteinExistence type="evidence at transcript level"/>
<accession>Q0P4M4</accession>
<comment type="function">
    <text evidence="3">Metallocarboxypeptidase that mediates deglutamylation of target proteins. Catalyzes the deglutamylation of polyglutamate side chains generated by post-translational polyglutamylation in proteins such as tubulins. Also removes gene-encoded polyglutamates from the carboxy-terminus of target proteins such as MYLK. Does not show detyrosinase or deglycylase activities from the carboxy-terminus of tubulin.</text>
</comment>
<comment type="function">
    <text evidence="3">Metallocarboxypeptidase that mediates deglutamylation of tubulin and non-tubulin target proteins. Catalyzes the removal of polyglutamate side chains present on the gamma-carboxyl group of glutamate residues within the C-terminal tail of tubulin protein. Specifically cleaves tubulin long-side-chains, while it is not able to remove the branching point glutamate. Also catalyzes the removal of polyglutamate residues from the carboxy-terminus of non-tubulin proteins.</text>
</comment>
<comment type="catalytic activity">
    <reaction evidence="3">
        <text>(L-glutamyl)(n+1)-gamma-L-glutamyl-L-glutamyl-[protein] + H2O = (L-glutamyl)(n)-gamma-L-glutamyl-L-glutamyl-[protein] + L-glutamate</text>
        <dbReference type="Rhea" id="RHEA:60004"/>
        <dbReference type="Rhea" id="RHEA-COMP:15519"/>
        <dbReference type="Rhea" id="RHEA-COMP:15675"/>
        <dbReference type="ChEBI" id="CHEBI:15377"/>
        <dbReference type="ChEBI" id="CHEBI:29985"/>
        <dbReference type="ChEBI" id="CHEBI:143623"/>
    </reaction>
    <physiologicalReaction direction="left-to-right" evidence="3">
        <dbReference type="Rhea" id="RHEA:60005"/>
    </physiologicalReaction>
</comment>
<comment type="cofactor">
    <cofactor evidence="1">
        <name>Zn(2+)</name>
        <dbReference type="ChEBI" id="CHEBI:29105"/>
    </cofactor>
    <text evidence="1">Binds 1 zinc ion per subunit.</text>
</comment>
<comment type="subcellular location">
    <subcellularLocation>
        <location evidence="3">Cytoplasm</location>
        <location evidence="3">Cytosol</location>
    </subcellularLocation>
    <subcellularLocation>
        <location evidence="2">Cytoplasm</location>
        <location evidence="2">Cytoskeleton</location>
        <location evidence="2">Microtubule organizing center</location>
        <location evidence="2">Centrosome</location>
        <location evidence="2">Centriole</location>
    </subcellularLocation>
    <subcellularLocation>
        <location evidence="2">Cytoplasm</location>
        <location evidence="2">Cytoskeleton</location>
        <location evidence="2">Cilium basal body</location>
    </subcellularLocation>
    <text evidence="2">Colocalizes with gamma-tubulin in the centrioles and with glutamylated tubulin in the basal bodies of ciliated cells.</text>
</comment>
<comment type="similarity">
    <text evidence="6">Belongs to the peptidase M14 family.</text>
</comment>
<comment type="caution">
    <text evidence="2 3">Was initially shown to catalyze the removal of carboxy-terminus tyrosine from alpha-tubulin (By similarity). However, later studies did not identified any detyrosinase or deglycylase activities from the carboxy-terminus of tubulin (By similarity).</text>
</comment>
<comment type="caution">
    <text evidence="2">Was originally thought to have detyrosinating activity from C-terminal positions on tubulin.</text>
</comment>
<organism>
    <name type="scientific">Xenopus tropicalis</name>
    <name type="common">Western clawed frog</name>
    <name type="synonym">Silurana tropicalis</name>
    <dbReference type="NCBI Taxonomy" id="8364"/>
    <lineage>
        <taxon>Eukaryota</taxon>
        <taxon>Metazoa</taxon>
        <taxon>Chordata</taxon>
        <taxon>Craniata</taxon>
        <taxon>Vertebrata</taxon>
        <taxon>Euteleostomi</taxon>
        <taxon>Amphibia</taxon>
        <taxon>Batrachia</taxon>
        <taxon>Anura</taxon>
        <taxon>Pipoidea</taxon>
        <taxon>Pipidae</taxon>
        <taxon>Xenopodinae</taxon>
        <taxon>Xenopus</taxon>
        <taxon>Silurana</taxon>
    </lineage>
</organism>
<protein>
    <recommendedName>
        <fullName evidence="3">Cytosolic carboxypeptidase 2</fullName>
        <ecNumber evidence="3">3.4.17.-</ecNumber>
    </recommendedName>
    <alternativeName>
        <fullName>ATP/GTP-binding protein-like 2</fullName>
    </alternativeName>
    <alternativeName>
        <fullName evidence="6">Protein deglutamylase CCP2</fullName>
    </alternativeName>
</protein>
<gene>
    <name type="primary">agbl2</name>
    <name type="synonym">ccp2</name>
</gene>
<dbReference type="EC" id="3.4.17.-" evidence="3"/>
<dbReference type="EMBL" id="BC121989">
    <property type="protein sequence ID" value="AAI21990.1"/>
    <property type="molecule type" value="mRNA"/>
</dbReference>
<dbReference type="RefSeq" id="NP_001072531.1">
    <property type="nucleotide sequence ID" value="NM_001079063.1"/>
</dbReference>
<dbReference type="SMR" id="Q0P4M4"/>
<dbReference type="FunCoup" id="Q0P4M4">
    <property type="interactions" value="403"/>
</dbReference>
<dbReference type="STRING" id="8364.ENSXETP00000032788"/>
<dbReference type="MEROPS" id="M14.029"/>
<dbReference type="GeneID" id="779986"/>
<dbReference type="KEGG" id="xtr:779986"/>
<dbReference type="AGR" id="Xenbase:XB-GENE-997506"/>
<dbReference type="CTD" id="79841"/>
<dbReference type="Xenbase" id="XB-GENE-997506">
    <property type="gene designation" value="agbl2"/>
</dbReference>
<dbReference type="InParanoid" id="Q0P4M4"/>
<dbReference type="OrthoDB" id="10253041at2759"/>
<dbReference type="Proteomes" id="UP000008143">
    <property type="component" value="Chromosome 4"/>
</dbReference>
<dbReference type="GO" id="GO:0005814">
    <property type="term" value="C:centriole"/>
    <property type="evidence" value="ECO:0000250"/>
    <property type="project" value="UniProtKB"/>
</dbReference>
<dbReference type="GO" id="GO:0036064">
    <property type="term" value="C:ciliary basal body"/>
    <property type="evidence" value="ECO:0000250"/>
    <property type="project" value="UniProtKB"/>
</dbReference>
<dbReference type="GO" id="GO:0005829">
    <property type="term" value="C:cytosol"/>
    <property type="evidence" value="ECO:0000250"/>
    <property type="project" value="UniProtKB"/>
</dbReference>
<dbReference type="GO" id="GO:0004181">
    <property type="term" value="F:metallocarboxypeptidase activity"/>
    <property type="evidence" value="ECO:0000250"/>
    <property type="project" value="UniProtKB"/>
</dbReference>
<dbReference type="GO" id="GO:0008270">
    <property type="term" value="F:zinc ion binding"/>
    <property type="evidence" value="ECO:0007669"/>
    <property type="project" value="InterPro"/>
</dbReference>
<dbReference type="GO" id="GO:0035610">
    <property type="term" value="P:protein side chain deglutamylation"/>
    <property type="evidence" value="ECO:0000250"/>
    <property type="project" value="UniProtKB"/>
</dbReference>
<dbReference type="GO" id="GO:0006508">
    <property type="term" value="P:proteolysis"/>
    <property type="evidence" value="ECO:0007669"/>
    <property type="project" value="UniProtKB-KW"/>
</dbReference>
<dbReference type="CDD" id="cd06907">
    <property type="entry name" value="M14_AGBL2-3_like"/>
    <property type="match status" value="1"/>
</dbReference>
<dbReference type="FunFam" id="3.40.630.10:FF:000011">
    <property type="entry name" value="cytosolic carboxypeptidase 2 isoform X1"/>
    <property type="match status" value="1"/>
</dbReference>
<dbReference type="Gene3D" id="2.60.40.3120">
    <property type="match status" value="1"/>
</dbReference>
<dbReference type="Gene3D" id="3.40.630.10">
    <property type="entry name" value="Zn peptidases"/>
    <property type="match status" value="1"/>
</dbReference>
<dbReference type="InterPro" id="IPR050821">
    <property type="entry name" value="Cytosolic_carboxypeptidase"/>
</dbReference>
<dbReference type="InterPro" id="IPR040626">
    <property type="entry name" value="Pepdidase_M14_N"/>
</dbReference>
<dbReference type="InterPro" id="IPR000834">
    <property type="entry name" value="Peptidase_M14"/>
</dbReference>
<dbReference type="PANTHER" id="PTHR12756">
    <property type="entry name" value="CYTOSOLIC CARBOXYPEPTIDASE"/>
    <property type="match status" value="1"/>
</dbReference>
<dbReference type="PANTHER" id="PTHR12756:SF41">
    <property type="entry name" value="CYTOSOLIC CARBOXYPEPTIDASE 2"/>
    <property type="match status" value="1"/>
</dbReference>
<dbReference type="Pfam" id="PF18027">
    <property type="entry name" value="Pepdidase_M14_N"/>
    <property type="match status" value="1"/>
</dbReference>
<dbReference type="Pfam" id="PF00246">
    <property type="entry name" value="Peptidase_M14"/>
    <property type="match status" value="1"/>
</dbReference>
<dbReference type="SMART" id="SM00631">
    <property type="entry name" value="Zn_pept"/>
    <property type="match status" value="1"/>
</dbReference>
<dbReference type="SUPFAM" id="SSF53187">
    <property type="entry name" value="Zn-dependent exopeptidases"/>
    <property type="match status" value="1"/>
</dbReference>
<dbReference type="PROSITE" id="PS52035">
    <property type="entry name" value="PEPTIDASE_M14"/>
    <property type="match status" value="1"/>
</dbReference>